<feature type="chain" id="PRO_0000412272" description="2,3,4,5-tetrahydropyridine-2,6-dicarboxylate N-succinyltransferase">
    <location>
        <begin position="1"/>
        <end position="343"/>
    </location>
</feature>
<feature type="active site" description="Acyl-anhydride intermediate" evidence="1">
    <location>
        <position position="220"/>
    </location>
</feature>
<feature type="binding site" evidence="1">
    <location>
        <position position="204"/>
    </location>
    <ligand>
        <name>Mg(2+)</name>
        <dbReference type="ChEBI" id="CHEBI:18420"/>
        <label>2</label>
        <note>ligand shared between trimeric partners</note>
    </ligand>
</feature>
<feature type="binding site" evidence="1">
    <location>
        <position position="222"/>
    </location>
    <ligand>
        <name>succinyl-CoA</name>
        <dbReference type="ChEBI" id="CHEBI:57292"/>
    </ligand>
</feature>
<feature type="binding site" evidence="1">
    <location>
        <position position="237"/>
    </location>
    <ligand>
        <name>succinyl-CoA</name>
        <dbReference type="ChEBI" id="CHEBI:57292"/>
    </ligand>
</feature>
<feature type="binding site" evidence="1">
    <location>
        <position position="240"/>
    </location>
    <ligand>
        <name>succinyl-CoA</name>
        <dbReference type="ChEBI" id="CHEBI:57292"/>
    </ligand>
</feature>
<feature type="binding site" evidence="1">
    <location>
        <position position="263"/>
    </location>
    <ligand>
        <name>succinyl-CoA</name>
        <dbReference type="ChEBI" id="CHEBI:57292"/>
    </ligand>
</feature>
<feature type="binding site" evidence="1">
    <location>
        <begin position="278"/>
        <end position="279"/>
    </location>
    <ligand>
        <name>succinyl-CoA</name>
        <dbReference type="ChEBI" id="CHEBI:57292"/>
    </ligand>
</feature>
<feature type="binding site" evidence="1">
    <location>
        <position position="286"/>
    </location>
    <ligand>
        <name>succinyl-CoA</name>
        <dbReference type="ChEBI" id="CHEBI:57292"/>
    </ligand>
</feature>
<feature type="binding site" evidence="1">
    <location>
        <position position="303"/>
    </location>
    <ligand>
        <name>succinyl-CoA</name>
        <dbReference type="ChEBI" id="CHEBI:57292"/>
    </ligand>
</feature>
<feature type="binding site" evidence="1">
    <location>
        <begin position="316"/>
        <end position="319"/>
    </location>
    <ligand>
        <name>succinyl-CoA</name>
        <dbReference type="ChEBI" id="CHEBI:57292"/>
    </ligand>
</feature>
<protein>
    <recommendedName>
        <fullName evidence="1">2,3,4,5-tetrahydropyridine-2,6-dicarboxylate N-succinyltransferase</fullName>
        <ecNumber evidence="1">2.3.1.117</ecNumber>
    </recommendedName>
    <alternativeName>
        <fullName evidence="1">Tetrahydrodipicolinate N-succinyltransferase</fullName>
        <shortName evidence="1">THDP succinyltransferase</shortName>
        <shortName evidence="1">THP succinyltransferase</shortName>
    </alternativeName>
    <alternativeName>
        <fullName evidence="1">Tetrahydropicolinate succinylase</fullName>
    </alternativeName>
</protein>
<name>DAPD_VIBCH</name>
<keyword id="KW-0012">Acyltransferase</keyword>
<keyword id="KW-0028">Amino-acid biosynthesis</keyword>
<keyword id="KW-0963">Cytoplasm</keyword>
<keyword id="KW-0220">Diaminopimelate biosynthesis</keyword>
<keyword id="KW-0457">Lysine biosynthesis</keyword>
<keyword id="KW-0460">Magnesium</keyword>
<keyword id="KW-0479">Metal-binding</keyword>
<keyword id="KW-1185">Reference proteome</keyword>
<keyword id="KW-0808">Transferase</keyword>
<evidence type="ECO:0000255" key="1">
    <source>
        <dbReference type="HAMAP-Rule" id="MF_02122"/>
    </source>
</evidence>
<dbReference type="EC" id="2.3.1.117" evidence="1"/>
<dbReference type="EMBL" id="AE003852">
    <property type="protein sequence ID" value="AAF95473.1"/>
    <property type="molecule type" value="Genomic_DNA"/>
</dbReference>
<dbReference type="PIR" id="G82089">
    <property type="entry name" value="G82089"/>
</dbReference>
<dbReference type="RefSeq" id="NP_231960.1">
    <property type="nucleotide sequence ID" value="NC_002505.1"/>
</dbReference>
<dbReference type="RefSeq" id="WP_000312987.1">
    <property type="nucleotide sequence ID" value="NZ_LT906614.1"/>
</dbReference>
<dbReference type="SMR" id="Q9KPN7"/>
<dbReference type="STRING" id="243277.VC_2329"/>
<dbReference type="DNASU" id="2613125"/>
<dbReference type="EnsemblBacteria" id="AAF95473">
    <property type="protein sequence ID" value="AAF95473"/>
    <property type="gene ID" value="VC_2329"/>
</dbReference>
<dbReference type="KEGG" id="vch:VC_2329"/>
<dbReference type="PATRIC" id="fig|243277.26.peg.2215"/>
<dbReference type="eggNOG" id="COG2171">
    <property type="taxonomic scope" value="Bacteria"/>
</dbReference>
<dbReference type="HOGENOM" id="CLU_057490_0_0_6"/>
<dbReference type="UniPathway" id="UPA00034">
    <property type="reaction ID" value="UER00019"/>
</dbReference>
<dbReference type="Proteomes" id="UP000000584">
    <property type="component" value="Chromosome 1"/>
</dbReference>
<dbReference type="GO" id="GO:0005737">
    <property type="term" value="C:cytoplasm"/>
    <property type="evidence" value="ECO:0007669"/>
    <property type="project" value="UniProtKB-SubCell"/>
</dbReference>
<dbReference type="GO" id="GO:0008666">
    <property type="term" value="F:2,3,4,5-tetrahydropyridine-2,6-dicarboxylate N-succinyltransferase activity"/>
    <property type="evidence" value="ECO:0007669"/>
    <property type="project" value="UniProtKB-UniRule"/>
</dbReference>
<dbReference type="GO" id="GO:0000287">
    <property type="term" value="F:magnesium ion binding"/>
    <property type="evidence" value="ECO:0007669"/>
    <property type="project" value="UniProtKB-UniRule"/>
</dbReference>
<dbReference type="GO" id="GO:0019877">
    <property type="term" value="P:diaminopimelate biosynthetic process"/>
    <property type="evidence" value="ECO:0007669"/>
    <property type="project" value="UniProtKB-UniRule"/>
</dbReference>
<dbReference type="GO" id="GO:0009089">
    <property type="term" value="P:lysine biosynthetic process via diaminopimelate"/>
    <property type="evidence" value="ECO:0007669"/>
    <property type="project" value="UniProtKB-UniRule"/>
</dbReference>
<dbReference type="CDD" id="cd04649">
    <property type="entry name" value="LbH_THP_succinylT_putative"/>
    <property type="match status" value="1"/>
</dbReference>
<dbReference type="FunFam" id="2.160.10.10:FF:000009">
    <property type="entry name" value="2,3,4,5-tetrahydropyridine-2,6-dicarboxylate N-succinyltransferase"/>
    <property type="match status" value="1"/>
</dbReference>
<dbReference type="FunFam" id="3.30.60.70:FF:000001">
    <property type="entry name" value="2,3,4,5-tetrahydropyridine-2,6-dicarboxylate N-succinyltransferase"/>
    <property type="match status" value="1"/>
</dbReference>
<dbReference type="Gene3D" id="3.30.70.2010">
    <property type="match status" value="1"/>
</dbReference>
<dbReference type="Gene3D" id="2.160.10.10">
    <property type="entry name" value="Hexapeptide repeat proteins"/>
    <property type="match status" value="1"/>
</dbReference>
<dbReference type="Gene3D" id="3.30.60.70">
    <property type="entry name" value="Trimeric LpxA-like enzymes"/>
    <property type="match status" value="1"/>
</dbReference>
<dbReference type="HAMAP" id="MF_02122">
    <property type="entry name" value="DapD_type2"/>
    <property type="match status" value="1"/>
</dbReference>
<dbReference type="InterPro" id="IPR019876">
    <property type="entry name" value="DapD_gammaproteobac"/>
</dbReference>
<dbReference type="InterPro" id="IPR001451">
    <property type="entry name" value="Hexapep"/>
</dbReference>
<dbReference type="InterPro" id="IPR032784">
    <property type="entry name" value="THDPS_M"/>
</dbReference>
<dbReference type="InterPro" id="IPR038361">
    <property type="entry name" value="THDPS_M_sf"/>
</dbReference>
<dbReference type="InterPro" id="IPR011004">
    <property type="entry name" value="Trimer_LpxA-like_sf"/>
</dbReference>
<dbReference type="InterPro" id="IPR026586">
    <property type="entry name" value="Type2_DapD"/>
</dbReference>
<dbReference type="NCBIfam" id="TIGR03536">
    <property type="entry name" value="DapD_gpp"/>
    <property type="match status" value="1"/>
</dbReference>
<dbReference type="Pfam" id="PF14602">
    <property type="entry name" value="Hexapep_2"/>
    <property type="match status" value="1"/>
</dbReference>
<dbReference type="Pfam" id="PF14789">
    <property type="entry name" value="THDPS_M"/>
    <property type="match status" value="1"/>
</dbReference>
<dbReference type="Pfam" id="PF14790">
    <property type="entry name" value="THDPS_N"/>
    <property type="match status" value="1"/>
</dbReference>
<dbReference type="SUPFAM" id="SSF51161">
    <property type="entry name" value="Trimeric LpxA-like enzymes"/>
    <property type="match status" value="1"/>
</dbReference>
<accession>Q9KPN7</accession>
<proteinExistence type="inferred from homology"/>
<gene>
    <name evidence="1" type="primary">dapD</name>
    <name type="ordered locus">VC_2329</name>
</gene>
<comment type="function">
    <text evidence="1">Catalyzes the conversion of the cyclic tetrahydrodipicolinate (THDP) into the acyclic N-succinyl-L-2-amino-6-oxopimelate using succinyl-CoA.</text>
</comment>
<comment type="catalytic activity">
    <reaction evidence="1">
        <text>(S)-2,3,4,5-tetrahydrodipicolinate + succinyl-CoA + H2O = (S)-2-succinylamino-6-oxoheptanedioate + CoA</text>
        <dbReference type="Rhea" id="RHEA:17325"/>
        <dbReference type="ChEBI" id="CHEBI:15377"/>
        <dbReference type="ChEBI" id="CHEBI:15685"/>
        <dbReference type="ChEBI" id="CHEBI:16845"/>
        <dbReference type="ChEBI" id="CHEBI:57287"/>
        <dbReference type="ChEBI" id="CHEBI:57292"/>
        <dbReference type="EC" id="2.3.1.117"/>
    </reaction>
</comment>
<comment type="pathway">
    <text evidence="1">Amino-acid biosynthesis; L-lysine biosynthesis via DAP pathway; LL-2,6-diaminopimelate from (S)-tetrahydrodipicolinate (succinylase route): step 1/3.</text>
</comment>
<comment type="subunit">
    <text evidence="1">Homotrimer.</text>
</comment>
<comment type="subcellular location">
    <subcellularLocation>
        <location evidence="1">Cytoplasm</location>
    </subcellularLocation>
</comment>
<comment type="similarity">
    <text evidence="1">Belongs to the type 2 tetrahydrodipicolinate N-succinyltransferase family.</text>
</comment>
<organism>
    <name type="scientific">Vibrio cholerae serotype O1 (strain ATCC 39315 / El Tor Inaba N16961)</name>
    <dbReference type="NCBI Taxonomy" id="243277"/>
    <lineage>
        <taxon>Bacteria</taxon>
        <taxon>Pseudomonadati</taxon>
        <taxon>Pseudomonadota</taxon>
        <taxon>Gammaproteobacteria</taxon>
        <taxon>Vibrionales</taxon>
        <taxon>Vibrionaceae</taxon>
        <taxon>Vibrio</taxon>
    </lineage>
</organism>
<sequence length="343" mass="35648">MAYFALGLATATKNRDGKIIEAFFPTPILAPSDALVAALAPIAGYQEGNQALDITAAQSAQLAAVFAAHQQAASAAFADKAANAKQPLVLVILASDDKPQSVAEGYLKLQLISHRLVKPHGTVLDGIFGLLHNIAWTNEGPIDLPELAERQIEARLAGRVLTVDCVDKFPKMVDYVVPAGIRIADTSRVRLGAHVGEGTTVMHEGFINFNAGTTGVSMVEGRISAGVVVGNGSDIGGGASIMGTLSGGGKVVVSIGENSLLGANAGLGFPLGDRCTVESGLYVTAGTKVRTLDKDGNQVDIVKARDLAGVSDLLFRRNSLTGQIECLANKSAVELNSELHKNN</sequence>
<reference key="1">
    <citation type="journal article" date="2000" name="Nature">
        <title>DNA sequence of both chromosomes of the cholera pathogen Vibrio cholerae.</title>
        <authorList>
            <person name="Heidelberg J.F."/>
            <person name="Eisen J.A."/>
            <person name="Nelson W.C."/>
            <person name="Clayton R.A."/>
            <person name="Gwinn M.L."/>
            <person name="Dodson R.J."/>
            <person name="Haft D.H."/>
            <person name="Hickey E.K."/>
            <person name="Peterson J.D."/>
            <person name="Umayam L.A."/>
            <person name="Gill S.R."/>
            <person name="Nelson K.E."/>
            <person name="Read T.D."/>
            <person name="Tettelin H."/>
            <person name="Richardson D.L."/>
            <person name="Ermolaeva M.D."/>
            <person name="Vamathevan J.J."/>
            <person name="Bass S."/>
            <person name="Qin H."/>
            <person name="Dragoi I."/>
            <person name="Sellers P."/>
            <person name="McDonald L.A."/>
            <person name="Utterback T.R."/>
            <person name="Fleischmann R.D."/>
            <person name="Nierman W.C."/>
            <person name="White O."/>
            <person name="Salzberg S.L."/>
            <person name="Smith H.O."/>
            <person name="Colwell R.R."/>
            <person name="Mekalanos J.J."/>
            <person name="Venter J.C."/>
            <person name="Fraser C.M."/>
        </authorList>
    </citation>
    <scope>NUCLEOTIDE SEQUENCE [LARGE SCALE GENOMIC DNA]</scope>
    <source>
        <strain>ATCC 39315 / El Tor Inaba N16961</strain>
    </source>
</reference>